<feature type="chain" id="PRO_0000270568" description="Peroxisomal membrane protein PEX25">
    <location>
        <begin position="1"/>
        <end position="394"/>
    </location>
</feature>
<feature type="topological domain" description="Cytoplasmic" evidence="1">
    <location>
        <begin position="1"/>
        <end position="366"/>
    </location>
</feature>
<feature type="transmembrane region" description="Helical" evidence="1">
    <location>
        <begin position="367"/>
        <end position="383"/>
    </location>
</feature>
<feature type="topological domain" description="Lumenal" evidence="1">
    <location>
        <begin position="384"/>
        <end position="394"/>
    </location>
</feature>
<feature type="region of interest" description="Disordered" evidence="2">
    <location>
        <begin position="1"/>
        <end position="65"/>
    </location>
</feature>
<feature type="compositionally biased region" description="Polar residues" evidence="2">
    <location>
        <begin position="1"/>
        <end position="25"/>
    </location>
</feature>
<feature type="compositionally biased region" description="Basic and acidic residues" evidence="2">
    <location>
        <begin position="51"/>
        <end position="65"/>
    </location>
</feature>
<feature type="modified residue" description="Phosphoserine" evidence="11">
    <location>
        <position position="58"/>
    </location>
</feature>
<feature type="modified residue" description="Phosphoserine" evidence="11">
    <location>
        <position position="63"/>
    </location>
</feature>
<feature type="modified residue" description="Phosphoserine" evidence="12 13">
    <location>
        <position position="289"/>
    </location>
</feature>
<feature type="sequence conflict" description="In Ref. 3; AAT92840." evidence="10" ref="3">
    <original>D</original>
    <variation>N</variation>
    <location>
        <position position="8"/>
    </location>
</feature>
<accession>Q02969</accession>
<accession>D6W3Q5</accession>
<accession>Q6B2A9</accession>
<keyword id="KW-0903">Direct protein sequencing</keyword>
<keyword id="KW-0472">Membrane</keyword>
<keyword id="KW-0576">Peroxisome</keyword>
<keyword id="KW-0962">Peroxisome biogenesis</keyword>
<keyword id="KW-0597">Phosphoprotein</keyword>
<keyword id="KW-1185">Reference proteome</keyword>
<keyword id="KW-0812">Transmembrane</keyword>
<keyword id="KW-1133">Transmembrane helix</keyword>
<evidence type="ECO:0000255" key="1"/>
<evidence type="ECO:0000256" key="2">
    <source>
        <dbReference type="SAM" id="MobiDB-lite"/>
    </source>
</evidence>
<evidence type="ECO:0000269" key="3">
    <source>
    </source>
</evidence>
<evidence type="ECO:0000269" key="4">
    <source>
    </source>
</evidence>
<evidence type="ECO:0000269" key="5">
    <source>
    </source>
</evidence>
<evidence type="ECO:0000269" key="6">
    <source>
    </source>
</evidence>
<evidence type="ECO:0000269" key="7">
    <source>
    </source>
</evidence>
<evidence type="ECO:0000269" key="8">
    <source>
    </source>
</evidence>
<evidence type="ECO:0000269" key="9">
    <source>
    </source>
</evidence>
<evidence type="ECO:0000305" key="10"/>
<evidence type="ECO:0007744" key="11">
    <source>
    </source>
</evidence>
<evidence type="ECO:0007744" key="12">
    <source>
    </source>
</evidence>
<evidence type="ECO:0007744" key="13">
    <source>
    </source>
</evidence>
<sequence>MSQFGTTDIVSGSETPPYSGASYQDAQDDNTHPHSSDAGAEKFSAGSGSESHTESSRSDDEDSQAKTKMVDNITILKYILDSLSGRDKLAKIIKYALDILKLFIEKSKRNLTVLDPSVLTYYTKILKNLTVKVALRHPITVIKVLLLSLLRNFDKKIDFISQQLSTFRYILRFGGTPFRVCSFLGKFNKTRKCNFQIDQIKKIWFNEASLREFLDLYYGIFDELDLLYKLKIWTNKSFYSFVSRQESLAWQYDILLSLKDHWLNLQSLQKRQLELEVQLKVQNNALLLSPILMHQAHKDDGSQSPIRKQLLNDLNVNNDAEVLIHKQLKAIKDEKTLVYLDIARLSFDCMANTSDILNLKTPKGTYAVLSLGSGLTGLVKLWITTKRSLCSSKD</sequence>
<proteinExistence type="evidence at protein level"/>
<name>PEX25_YEAST</name>
<organism>
    <name type="scientific">Saccharomyces cerevisiae (strain ATCC 204508 / S288c)</name>
    <name type="common">Baker's yeast</name>
    <dbReference type="NCBI Taxonomy" id="559292"/>
    <lineage>
        <taxon>Eukaryota</taxon>
        <taxon>Fungi</taxon>
        <taxon>Dikarya</taxon>
        <taxon>Ascomycota</taxon>
        <taxon>Saccharomycotina</taxon>
        <taxon>Saccharomycetes</taxon>
        <taxon>Saccharomycetales</taxon>
        <taxon>Saccharomycetaceae</taxon>
        <taxon>Saccharomyces</taxon>
    </lineage>
</organism>
<comment type="function">
    <text evidence="3 4 5 8 9">Required for regulation of peroxisome size and maintenance. Has a role in the import of peroxisomal matrix proteins. Imports RHO1 into the peroxisome. Also promotes peroxisome division and biogenesis.</text>
</comment>
<comment type="subunit">
    <text evidence="4 5 9">Homooligomer. Interacts with PEX27 and PEX34.</text>
</comment>
<comment type="subcellular location">
    <subcellularLocation>
        <location evidence="3 5 6 8">Peroxisome membrane</location>
        <topology evidence="3 5 6 8">Single-pass membrane protein</topology>
    </subcellularLocation>
</comment>
<comment type="miscellaneous">
    <text evidence="7">Present with 2420 molecules/cell in log phase SD medium.</text>
</comment>
<dbReference type="EMBL" id="U43503">
    <property type="protein sequence ID" value="AAB68249.1"/>
    <property type="molecule type" value="Genomic_DNA"/>
</dbReference>
<dbReference type="EMBL" id="AY692821">
    <property type="protein sequence ID" value="AAT92840.1"/>
    <property type="molecule type" value="Genomic_DNA"/>
</dbReference>
<dbReference type="EMBL" id="BK006949">
    <property type="protein sequence ID" value="DAA11321.1"/>
    <property type="molecule type" value="Genomic_DNA"/>
</dbReference>
<dbReference type="PIR" id="S62009">
    <property type="entry name" value="S62009"/>
</dbReference>
<dbReference type="RefSeq" id="NP_015213.1">
    <property type="nucleotide sequence ID" value="NM_001183926.1"/>
</dbReference>
<dbReference type="SMR" id="Q02969"/>
<dbReference type="BioGRID" id="36068">
    <property type="interactions" value="80"/>
</dbReference>
<dbReference type="DIP" id="DIP-5292N"/>
<dbReference type="FunCoup" id="Q02969">
    <property type="interactions" value="70"/>
</dbReference>
<dbReference type="IntAct" id="Q02969">
    <property type="interactions" value="6"/>
</dbReference>
<dbReference type="MINT" id="Q02969"/>
<dbReference type="STRING" id="4932.YPL112C"/>
<dbReference type="TCDB" id="3.A.20.1.5">
    <property type="family name" value="the peroxisomal protein importer (ppi) family"/>
</dbReference>
<dbReference type="iPTMnet" id="Q02969"/>
<dbReference type="PaxDb" id="4932-YPL112C"/>
<dbReference type="PeptideAtlas" id="Q02969"/>
<dbReference type="EnsemblFungi" id="YPL112C_mRNA">
    <property type="protein sequence ID" value="YPL112C"/>
    <property type="gene ID" value="YPL112C"/>
</dbReference>
<dbReference type="GeneID" id="855991"/>
<dbReference type="KEGG" id="sce:YPL112C"/>
<dbReference type="AGR" id="SGD:S000006033"/>
<dbReference type="SGD" id="S000006033">
    <property type="gene designation" value="PEX25"/>
</dbReference>
<dbReference type="VEuPathDB" id="FungiDB:YPL112C"/>
<dbReference type="eggNOG" id="ENOG502R7FJ">
    <property type="taxonomic scope" value="Eukaryota"/>
</dbReference>
<dbReference type="HOGENOM" id="CLU_043324_0_0_1"/>
<dbReference type="InParanoid" id="Q02969"/>
<dbReference type="OMA" id="YGIMDEL"/>
<dbReference type="OrthoDB" id="411017at2759"/>
<dbReference type="BioCyc" id="YEAST:G3O-34013-MONOMER"/>
<dbReference type="BioGRID-ORCS" id="855991">
    <property type="hits" value="0 hits in 10 CRISPR screens"/>
</dbReference>
<dbReference type="PRO" id="PR:Q02969"/>
<dbReference type="Proteomes" id="UP000002311">
    <property type="component" value="Chromosome XVI"/>
</dbReference>
<dbReference type="RNAct" id="Q02969">
    <property type="molecule type" value="protein"/>
</dbReference>
<dbReference type="GO" id="GO:0005778">
    <property type="term" value="C:peroxisomal membrane"/>
    <property type="evidence" value="ECO:0000314"/>
    <property type="project" value="SGD"/>
</dbReference>
<dbReference type="GO" id="GO:0005777">
    <property type="term" value="C:peroxisome"/>
    <property type="evidence" value="ECO:0000314"/>
    <property type="project" value="UniProtKB"/>
</dbReference>
<dbReference type="GO" id="GO:0016559">
    <property type="term" value="P:peroxisome fission"/>
    <property type="evidence" value="ECO:0000314"/>
    <property type="project" value="UniProtKB"/>
</dbReference>
<dbReference type="GO" id="GO:0007031">
    <property type="term" value="P:peroxisome organization"/>
    <property type="evidence" value="ECO:0000315"/>
    <property type="project" value="SGD"/>
</dbReference>
<dbReference type="GO" id="GO:0016558">
    <property type="term" value="P:protein import into peroxisome matrix"/>
    <property type="evidence" value="ECO:0000315"/>
    <property type="project" value="SGD"/>
</dbReference>
<dbReference type="GO" id="GO:0044375">
    <property type="term" value="P:regulation of peroxisome size"/>
    <property type="evidence" value="ECO:0000314"/>
    <property type="project" value="UniProtKB"/>
</dbReference>
<dbReference type="InterPro" id="IPR008733">
    <property type="entry name" value="PEX11"/>
</dbReference>
<dbReference type="PANTHER" id="PTHR12652:SF50">
    <property type="entry name" value="PEROXIN 11"/>
    <property type="match status" value="1"/>
</dbReference>
<dbReference type="PANTHER" id="PTHR12652">
    <property type="entry name" value="PEROXISOMAL BIOGENESIS FACTOR 11"/>
    <property type="match status" value="1"/>
</dbReference>
<dbReference type="Pfam" id="PF05648">
    <property type="entry name" value="PEX11"/>
    <property type="match status" value="1"/>
</dbReference>
<protein>
    <recommendedName>
        <fullName>Peroxisomal membrane protein PEX25</fullName>
    </recommendedName>
    <alternativeName>
        <fullName>Peroxin-25</fullName>
    </alternativeName>
</protein>
<gene>
    <name type="primary">PEX25</name>
    <name type="ordered locus">YPL112C</name>
</gene>
<reference key="1">
    <citation type="journal article" date="1997" name="Nature">
        <title>The nucleotide sequence of Saccharomyces cerevisiae chromosome XVI.</title>
        <authorList>
            <person name="Bussey H."/>
            <person name="Storms R.K."/>
            <person name="Ahmed A."/>
            <person name="Albermann K."/>
            <person name="Allen E."/>
            <person name="Ansorge W."/>
            <person name="Araujo R."/>
            <person name="Aparicio A."/>
            <person name="Barrell B.G."/>
            <person name="Badcock K."/>
            <person name="Benes V."/>
            <person name="Botstein D."/>
            <person name="Bowman S."/>
            <person name="Brueckner M."/>
            <person name="Carpenter J."/>
            <person name="Cherry J.M."/>
            <person name="Chung E."/>
            <person name="Churcher C.M."/>
            <person name="Coster F."/>
            <person name="Davis K."/>
            <person name="Davis R.W."/>
            <person name="Dietrich F.S."/>
            <person name="Delius H."/>
            <person name="DiPaolo T."/>
            <person name="Dubois E."/>
            <person name="Duesterhoeft A."/>
            <person name="Duncan M."/>
            <person name="Floeth M."/>
            <person name="Fortin N."/>
            <person name="Friesen J.D."/>
            <person name="Fritz C."/>
            <person name="Goffeau A."/>
            <person name="Hall J."/>
            <person name="Hebling U."/>
            <person name="Heumann K."/>
            <person name="Hilbert H."/>
            <person name="Hillier L.W."/>
            <person name="Hunicke-Smith S."/>
            <person name="Hyman R.W."/>
            <person name="Johnston M."/>
            <person name="Kalman S."/>
            <person name="Kleine K."/>
            <person name="Komp C."/>
            <person name="Kurdi O."/>
            <person name="Lashkari D."/>
            <person name="Lew H."/>
            <person name="Lin A."/>
            <person name="Lin D."/>
            <person name="Louis E.J."/>
            <person name="Marathe R."/>
            <person name="Messenguy F."/>
            <person name="Mewes H.-W."/>
            <person name="Mirtipati S."/>
            <person name="Moestl D."/>
            <person name="Mueller-Auer S."/>
            <person name="Namath A."/>
            <person name="Nentwich U."/>
            <person name="Oefner P."/>
            <person name="Pearson D."/>
            <person name="Petel F.X."/>
            <person name="Pohl T.M."/>
            <person name="Purnelle B."/>
            <person name="Rajandream M.A."/>
            <person name="Rechmann S."/>
            <person name="Rieger M."/>
            <person name="Riles L."/>
            <person name="Roberts D."/>
            <person name="Schaefer M."/>
            <person name="Scharfe M."/>
            <person name="Scherens B."/>
            <person name="Schramm S."/>
            <person name="Schroeder M."/>
            <person name="Sdicu A.-M."/>
            <person name="Tettelin H."/>
            <person name="Urrestarazu L.A."/>
            <person name="Ushinsky S."/>
            <person name="Vierendeels F."/>
            <person name="Vissers S."/>
            <person name="Voss H."/>
            <person name="Walsh S.V."/>
            <person name="Wambutt R."/>
            <person name="Wang Y."/>
            <person name="Wedler E."/>
            <person name="Wedler H."/>
            <person name="Winnett E."/>
            <person name="Zhong W.-W."/>
            <person name="Zollner A."/>
            <person name="Vo D.H."/>
            <person name="Hani J."/>
        </authorList>
    </citation>
    <scope>NUCLEOTIDE SEQUENCE [LARGE SCALE GENOMIC DNA]</scope>
    <source>
        <strain>ATCC 204508 / S288c</strain>
    </source>
</reference>
<reference key="2">
    <citation type="journal article" date="2014" name="G3 (Bethesda)">
        <title>The reference genome sequence of Saccharomyces cerevisiae: Then and now.</title>
        <authorList>
            <person name="Engel S.R."/>
            <person name="Dietrich F.S."/>
            <person name="Fisk D.G."/>
            <person name="Binkley G."/>
            <person name="Balakrishnan R."/>
            <person name="Costanzo M.C."/>
            <person name="Dwight S.S."/>
            <person name="Hitz B.C."/>
            <person name="Karra K."/>
            <person name="Nash R.S."/>
            <person name="Weng S."/>
            <person name="Wong E.D."/>
            <person name="Lloyd P."/>
            <person name="Skrzypek M.S."/>
            <person name="Miyasato S.R."/>
            <person name="Simison M."/>
            <person name="Cherry J.M."/>
        </authorList>
    </citation>
    <scope>GENOME REANNOTATION</scope>
    <source>
        <strain>ATCC 204508 / S288c</strain>
    </source>
</reference>
<reference key="3">
    <citation type="journal article" date="2007" name="Genome Res.">
        <title>Approaching a complete repository of sequence-verified protein-encoding clones for Saccharomyces cerevisiae.</title>
        <authorList>
            <person name="Hu Y."/>
            <person name="Rolfs A."/>
            <person name="Bhullar B."/>
            <person name="Murthy T.V.S."/>
            <person name="Zhu C."/>
            <person name="Berger M.F."/>
            <person name="Camargo A.A."/>
            <person name="Kelley F."/>
            <person name="McCarron S."/>
            <person name="Jepson D."/>
            <person name="Richardson A."/>
            <person name="Raphael J."/>
            <person name="Moreira D."/>
            <person name="Taycher E."/>
            <person name="Zuo D."/>
            <person name="Mohr S."/>
            <person name="Kane M.F."/>
            <person name="Williamson J."/>
            <person name="Simpson A.J.G."/>
            <person name="Bulyk M.L."/>
            <person name="Harlow E."/>
            <person name="Marsischky G."/>
            <person name="Kolodner R.D."/>
            <person name="LaBaer J."/>
        </authorList>
    </citation>
    <scope>NUCLEOTIDE SEQUENCE [GENOMIC DNA]</scope>
    <source>
        <strain>ATCC 204508 / S288c</strain>
    </source>
</reference>
<reference key="4">
    <citation type="journal article" date="2003" name="Mol. Biol. Cell">
        <title>Conserved function of pex11p and the novel pex25p and pex27p in peroxisome biogenesis.</title>
        <authorList>
            <person name="Rottensteiner H."/>
            <person name="Stein K."/>
            <person name="Sonnenhol E."/>
            <person name="Erdmann R."/>
        </authorList>
    </citation>
    <scope>PROTEIN SEQUENCE OF 56-70 AND 337-354</scope>
    <scope>FUNCTION</scope>
    <scope>SUBUNIT</scope>
    <scope>INTERACTION WITH PEX27</scope>
    <scope>SUBCELLULAR LOCATION</scope>
    <source>
        <strain>ATCC 201389 / BY4742</strain>
    </source>
</reference>
<reference key="5">
    <citation type="journal article" date="2002" name="J. Cell Biol.">
        <title>Transcriptome profiling to identify genes involved in peroxisome assembly and function.</title>
        <authorList>
            <person name="Smith J.J."/>
            <person name="Marelli M."/>
            <person name="Christmas R.H."/>
            <person name="Vizeacoumar F.J."/>
            <person name="Dilworth D.J."/>
            <person name="Ideker T."/>
            <person name="Galitski T."/>
            <person name="Dimitrov K."/>
            <person name="Rachubinski R.A."/>
            <person name="Aitchison J.D."/>
        </authorList>
    </citation>
    <scope>FUNCTION</scope>
    <scope>SUBCELLULAR LOCATION</scope>
</reference>
<reference key="6">
    <citation type="journal article" date="2003" name="Mol. Biol. Cell">
        <title>Pex11-related proteins in peroxisome dynamics: a role for the novel peroxin Pex27p in controlling peroxisome size and number in Saccharomyces cerevisiae.</title>
        <authorList>
            <person name="Tam Y.Y.C."/>
            <person name="Torres-Guzman J.C."/>
            <person name="Vizeacoumar F.J."/>
            <person name="Smith J.J."/>
            <person name="Marelli M."/>
            <person name="Aitchison J.D."/>
            <person name="Rachubinski R.A."/>
        </authorList>
    </citation>
    <scope>FUNCTION</scope>
    <scope>SUBUNIT</scope>
    <scope>INTERACTION WITH PEX27</scope>
</reference>
<reference key="7">
    <citation type="journal article" date="2003" name="Nature">
        <title>Global analysis of protein localization in budding yeast.</title>
        <authorList>
            <person name="Huh W.-K."/>
            <person name="Falvo J.V."/>
            <person name="Gerke L.C."/>
            <person name="Carroll A.S."/>
            <person name="Howson R.W."/>
            <person name="Weissman J.S."/>
            <person name="O'Shea E.K."/>
        </authorList>
    </citation>
    <scope>SUBCELLULAR LOCATION [LARGE SCALE ANALYSIS]</scope>
</reference>
<reference key="8">
    <citation type="journal article" date="2003" name="Nature">
        <title>Global analysis of protein expression in yeast.</title>
        <authorList>
            <person name="Ghaemmaghami S."/>
            <person name="Huh W.-K."/>
            <person name="Bower K."/>
            <person name="Howson R.W."/>
            <person name="Belle A."/>
            <person name="Dephoure N."/>
            <person name="O'Shea E.K."/>
            <person name="Weissman J.S."/>
        </authorList>
    </citation>
    <scope>LEVEL OF PROTEIN EXPRESSION [LARGE SCALE ANALYSIS]</scope>
</reference>
<reference key="9">
    <citation type="journal article" date="2004" name="J. Cell Biol.">
        <title>Quantitative mass spectrometry reveals a role for the GTPase Rho1p in actin organization on the peroxisome membrane.</title>
        <authorList>
            <person name="Marelli M."/>
            <person name="Smith J.J."/>
            <person name="Jung S."/>
            <person name="Yi E."/>
            <person name="Nesvizhskii A.I."/>
            <person name="Christmas R.H."/>
            <person name="Saleem R.A."/>
            <person name="Tam Y.Y.C."/>
            <person name="Fagarasanu A."/>
            <person name="Goodlett D.R."/>
            <person name="Aebersold R."/>
            <person name="Rachubinski R.A."/>
            <person name="Aitchison J.D."/>
        </authorList>
    </citation>
    <scope>FUNCTION</scope>
    <scope>SUBCELLULAR LOCATION</scope>
</reference>
<reference key="10">
    <citation type="journal article" date="2007" name="J. Proteome Res.">
        <title>Large-scale phosphorylation analysis of alpha-factor-arrested Saccharomyces cerevisiae.</title>
        <authorList>
            <person name="Li X."/>
            <person name="Gerber S.A."/>
            <person name="Rudner A.D."/>
            <person name="Beausoleil S.A."/>
            <person name="Haas W."/>
            <person name="Villen J."/>
            <person name="Elias J.E."/>
            <person name="Gygi S.P."/>
        </authorList>
    </citation>
    <scope>PHOSPHORYLATION [LARGE SCALE ANALYSIS] AT SER-289</scope>
    <scope>IDENTIFICATION BY MASS SPECTROMETRY [LARGE SCALE ANALYSIS]</scope>
    <source>
        <strain>ADR376</strain>
    </source>
</reference>
<reference key="11">
    <citation type="journal article" date="2007" name="Proc. Natl. Acad. Sci. U.S.A.">
        <title>Analysis of phosphorylation sites on proteins from Saccharomyces cerevisiae by electron transfer dissociation (ETD) mass spectrometry.</title>
        <authorList>
            <person name="Chi A."/>
            <person name="Huttenhower C."/>
            <person name="Geer L.Y."/>
            <person name="Coon J.J."/>
            <person name="Syka J.E.P."/>
            <person name="Bai D.L."/>
            <person name="Shabanowitz J."/>
            <person name="Burke D.J."/>
            <person name="Troyanskaya O.G."/>
            <person name="Hunt D.F."/>
        </authorList>
    </citation>
    <scope>PHOSPHORYLATION [LARGE SCALE ANALYSIS] AT SER-58 AND SER-63</scope>
    <scope>IDENTIFICATION BY MASS SPECTROMETRY [LARGE SCALE ANALYSIS]</scope>
</reference>
<reference key="12">
    <citation type="journal article" date="2008" name="Mol. Cell. Proteomics">
        <title>A multidimensional chromatography technology for in-depth phosphoproteome analysis.</title>
        <authorList>
            <person name="Albuquerque C.P."/>
            <person name="Smolka M.B."/>
            <person name="Payne S.H."/>
            <person name="Bafna V."/>
            <person name="Eng J."/>
            <person name="Zhou H."/>
        </authorList>
    </citation>
    <scope>PHOSPHORYLATION [LARGE SCALE ANALYSIS] AT SER-289</scope>
    <scope>IDENTIFICATION BY MASS SPECTROMETRY [LARGE SCALE ANALYSIS]</scope>
</reference>
<reference key="13">
    <citation type="journal article" date="2009" name="Science">
        <title>Global analysis of Cdk1 substrate phosphorylation sites provides insights into evolution.</title>
        <authorList>
            <person name="Holt L.J."/>
            <person name="Tuch B.B."/>
            <person name="Villen J."/>
            <person name="Johnson A.D."/>
            <person name="Gygi S.P."/>
            <person name="Morgan D.O."/>
        </authorList>
    </citation>
    <scope>IDENTIFICATION BY MASS SPECTROMETRY [LARGE SCALE ANALYSIS]</scope>
</reference>
<reference key="14">
    <citation type="journal article" date="2011" name="Mol. Biol. Cell">
        <title>The peroxin Pex34p functions with the Pex11 family of peroxisomal divisional proteins to regulate the peroxisome population in yeast.</title>
        <authorList>
            <person name="Tower R.J."/>
            <person name="Fagarasanu A."/>
            <person name="Aitchison J.D."/>
            <person name="Rachubinski R.A."/>
        </authorList>
    </citation>
    <scope>FUNCTION</scope>
    <scope>INTERACTION WITH PEX34</scope>
</reference>